<keyword id="KW-0091">Biomineralization</keyword>
<keyword id="KW-0130">Cell adhesion</keyword>
<keyword id="KW-0903">Direct protein sequencing</keyword>
<keyword id="KW-0325">Glycoprotein</keyword>
<keyword id="KW-0597">Phosphoprotein</keyword>
<keyword id="KW-1185">Reference proteome</keyword>
<keyword id="KW-0964">Secreted</keyword>
<keyword id="KW-0730">Sialic acid</keyword>
<keyword id="KW-0732">Signal</keyword>
<keyword id="KW-0765">Sulfation</keyword>
<accession>P79780</accession>
<accession>Q90619</accession>
<accession>Q91405</accession>
<sequence>MRSALLLACLLATASAFSVRSWLRRARAGDSEENAVLKSRHRYYLYRYAYPPLHRYKGSDSSEEEGDGSEEEEEGGAPSHAGTQAAGEGLTLGDVGPGGDAASAHQDCKGGQKGTRGDSGDEDSDEEEEEEEEEEEEEEVEEQDVSVNGTSTNTTAETPHGNNTVAAEEEEDDDEEEEEEEEEEEEAEATTAAATTAQDEVTTLGDEQRSEVTTAGEQWEYEVTVGARGDEGPTESSYGDQEEPARGDSYRAYEDEYGYYKGHGYDMYGQDYYYNQ</sequence>
<organism>
    <name type="scientific">Gallus gallus</name>
    <name type="common">Chicken</name>
    <dbReference type="NCBI Taxonomy" id="9031"/>
    <lineage>
        <taxon>Eukaryota</taxon>
        <taxon>Metazoa</taxon>
        <taxon>Chordata</taxon>
        <taxon>Craniata</taxon>
        <taxon>Vertebrata</taxon>
        <taxon>Euteleostomi</taxon>
        <taxon>Archelosauria</taxon>
        <taxon>Archosauria</taxon>
        <taxon>Dinosauria</taxon>
        <taxon>Saurischia</taxon>
        <taxon>Theropoda</taxon>
        <taxon>Coelurosauria</taxon>
        <taxon>Aves</taxon>
        <taxon>Neognathae</taxon>
        <taxon>Galloanserae</taxon>
        <taxon>Galliformes</taxon>
        <taxon>Phasianidae</taxon>
        <taxon>Phasianinae</taxon>
        <taxon>Gallus</taxon>
    </lineage>
</organism>
<evidence type="ECO:0000250" key="1">
    <source>
        <dbReference type="UniProtKB" id="P21815"/>
    </source>
</evidence>
<evidence type="ECO:0000250" key="2">
    <source>
        <dbReference type="UniProtKB" id="Q28862"/>
    </source>
</evidence>
<evidence type="ECO:0000255" key="3"/>
<evidence type="ECO:0000256" key="4">
    <source>
        <dbReference type="SAM" id="MobiDB-lite"/>
    </source>
</evidence>
<evidence type="ECO:0000269" key="5">
    <source>
    </source>
</evidence>
<evidence type="ECO:0000305" key="6"/>
<name>SIAL_CHICK</name>
<dbReference type="EMBL" id="U10577">
    <property type="protein sequence ID" value="AAB38374.1"/>
    <property type="molecule type" value="mRNA"/>
</dbReference>
<dbReference type="EMBL" id="U67889">
    <property type="protein sequence ID" value="AAB36520.1"/>
    <property type="molecule type" value="Genomic_DNA"/>
</dbReference>
<dbReference type="RefSeq" id="NP_990493.1">
    <property type="nucleotide sequence ID" value="NM_205162.1"/>
</dbReference>
<dbReference type="FunCoup" id="P79780">
    <property type="interactions" value="102"/>
</dbReference>
<dbReference type="STRING" id="9031.ENSGALP00000037334"/>
<dbReference type="GlyCosmos" id="P79780">
    <property type="glycosylation" value="3 sites, No reported glycans"/>
</dbReference>
<dbReference type="GlyGen" id="P79780">
    <property type="glycosylation" value="4 sites"/>
</dbReference>
<dbReference type="PaxDb" id="9031-ENSGALP00000037334"/>
<dbReference type="GeneID" id="396071"/>
<dbReference type="KEGG" id="gga:396071"/>
<dbReference type="CTD" id="3381"/>
<dbReference type="VEuPathDB" id="HostDB:geneid_396071"/>
<dbReference type="eggNOG" id="KOG1181">
    <property type="taxonomic scope" value="Eukaryota"/>
</dbReference>
<dbReference type="InParanoid" id="P79780"/>
<dbReference type="OrthoDB" id="9909090at2759"/>
<dbReference type="PRO" id="PR:P79780"/>
<dbReference type="Proteomes" id="UP000000539">
    <property type="component" value="Unassembled WGS sequence"/>
</dbReference>
<dbReference type="GO" id="GO:0005576">
    <property type="term" value="C:extracellular region"/>
    <property type="evidence" value="ECO:0007669"/>
    <property type="project" value="UniProtKB-SubCell"/>
</dbReference>
<dbReference type="GO" id="GO:0030282">
    <property type="term" value="P:bone mineralization"/>
    <property type="evidence" value="ECO:0000318"/>
    <property type="project" value="GO_Central"/>
</dbReference>
<dbReference type="GO" id="GO:0007155">
    <property type="term" value="P:cell adhesion"/>
    <property type="evidence" value="ECO:0007669"/>
    <property type="project" value="UniProtKB-KW"/>
</dbReference>
<dbReference type="GO" id="GO:0030198">
    <property type="term" value="P:extracellular matrix organization"/>
    <property type="evidence" value="ECO:0000318"/>
    <property type="project" value="GO_Central"/>
</dbReference>
<dbReference type="InterPro" id="IPR008412">
    <property type="entry name" value="IBSP"/>
</dbReference>
<dbReference type="PANTHER" id="PTHR10345">
    <property type="entry name" value="BONE SIALOPROTEIN 2"/>
    <property type="match status" value="1"/>
</dbReference>
<dbReference type="PANTHER" id="PTHR10345:SF0">
    <property type="entry name" value="BONE SIALOPROTEIN 2"/>
    <property type="match status" value="1"/>
</dbReference>
<dbReference type="Pfam" id="PF05432">
    <property type="entry name" value="BSP_II"/>
    <property type="match status" value="1"/>
</dbReference>
<reference key="1">
    <citation type="journal article" date="1995" name="J. Bone Miner. Res.">
        <title>Characterization of an avian bone sialoprotein (BSP) cDNA: comparisons to mammalian BSP and identification of conserved structural domains.</title>
        <authorList>
            <person name="Yang R."/>
            <person name="Gotoh Y."/>
            <person name="Moore M.A."/>
            <person name="Rafidi K."/>
            <person name="Gerstenfeld L.C."/>
        </authorList>
    </citation>
    <scope>NUCLEOTIDE SEQUENCE [MRNA]</scope>
    <source>
        <strain>White leghorn</strain>
        <tissue>Bone</tissue>
    </source>
</reference>
<reference key="2">
    <citation type="journal article" date="1997" name="J. Cell. Biochem.">
        <title>Structural analysis and characterization of tissue and hormonal responsive expression of the avian bone sialoprotein (BSP) gene.</title>
        <authorList>
            <person name="Yang R."/>
            <person name="Gerstenfeld L.C."/>
        </authorList>
    </citation>
    <scope>NUCLEOTIDE SEQUENCE [GENOMIC DNA]</scope>
</reference>
<reference evidence="6" key="3">
    <citation type="journal article" date="1990" name="Biochem. Biophys. Res. Commun.">
        <title>Comparison of two phosphoproteins in chicken bone and their similarities to the mammalian bone proteins, osteopontin and bone sialoprotein II.</title>
        <authorList>
            <person name="Gotoh Y."/>
            <person name="Pierschbacher M.D."/>
            <person name="Grzesiak J.J."/>
            <person name="Gerstenfeld L."/>
            <person name="Glimcher M.J."/>
        </authorList>
    </citation>
    <scope>PROTEIN SEQUENCE OF 48-55</scope>
    <scope>PHOSPHORYLATION</scope>
    <source>
        <tissue evidence="5">Bone</tissue>
    </source>
</reference>
<comment type="function">
    <text evidence="1">Binds tightly to hydroxyapatite. Appears to form an integral part of the mineralized matrix. Probably important to cell-matrix interaction. Promotes adhesion and migration of various cells via the alpha-V/beta-3 integrin receptor (ITGAV:ITGB3).</text>
</comment>
<comment type="subunit">
    <text evidence="1 2">Monomer (By similarity). Interacts with integrins; the interaction promotes cell adhesion (By similarity).</text>
</comment>
<comment type="subcellular location">
    <subcellularLocation>
        <location evidence="1">Secreted</location>
    </subcellularLocation>
</comment>
<comment type="domain">
    <text evidence="1">The Arg-Gly-Asp (RGD) sequence serves as an integrin-binding motif and is required for integrin-mediated cell attachment.</text>
</comment>
<comment type="PTM">
    <text evidence="5">Phosphorylated on serine and threonine residues.</text>
</comment>
<comment type="miscellaneous">
    <text>It is possible that the segments of clustered carboxyl groups mediate the strong binding to hydroxyapatite.</text>
</comment>
<feature type="signal peptide" evidence="2">
    <location>
        <begin position="1"/>
        <end position="16"/>
    </location>
</feature>
<feature type="chain" id="PRO_0000020333" description="Integrin-binding sialoprotein">
    <location>
        <begin position="17"/>
        <end position="276"/>
    </location>
</feature>
<feature type="region of interest" description="Disordered" evidence="4">
    <location>
        <begin position="54"/>
        <end position="251"/>
    </location>
</feature>
<feature type="short sequence motif" description="Cell attachment site" evidence="3">
    <location>
        <begin position="116"/>
        <end position="118"/>
    </location>
</feature>
<feature type="short sequence motif" description="Cell attachment site" evidence="3">
    <location>
        <begin position="228"/>
        <end position="230"/>
    </location>
</feature>
<feature type="short sequence motif" description="Integrin-binding motif" evidence="1">
    <location>
        <begin position="246"/>
        <end position="248"/>
    </location>
</feature>
<feature type="compositionally biased region" description="Acidic residues" evidence="4">
    <location>
        <begin position="61"/>
        <end position="75"/>
    </location>
</feature>
<feature type="compositionally biased region" description="Basic and acidic residues" evidence="4">
    <location>
        <begin position="106"/>
        <end position="119"/>
    </location>
</feature>
<feature type="compositionally biased region" description="Acidic residues" evidence="4">
    <location>
        <begin position="120"/>
        <end position="144"/>
    </location>
</feature>
<feature type="compositionally biased region" description="Polar residues" evidence="4">
    <location>
        <begin position="145"/>
        <end position="165"/>
    </location>
</feature>
<feature type="compositionally biased region" description="Acidic residues" evidence="4">
    <location>
        <begin position="167"/>
        <end position="188"/>
    </location>
</feature>
<feature type="compositionally biased region" description="Low complexity" evidence="4">
    <location>
        <begin position="189"/>
        <end position="200"/>
    </location>
</feature>
<feature type="modified residue" description="Sulfotyrosine" evidence="1">
    <location>
        <position position="272"/>
    </location>
</feature>
<feature type="modified residue" description="Sulfotyrosine" evidence="1">
    <location>
        <position position="273"/>
    </location>
</feature>
<feature type="glycosylation site" description="N-linked (GlcNAc...) asparagine" evidence="3">
    <location>
        <position position="148"/>
    </location>
</feature>
<feature type="glycosylation site" description="N-linked (GlcNAc...) asparagine" evidence="3">
    <location>
        <position position="153"/>
    </location>
</feature>
<feature type="glycosylation site" description="N-linked (GlcNAc...) asparagine" evidence="3">
    <location>
        <position position="162"/>
    </location>
</feature>
<feature type="sequence conflict" description="In Ref. 1; AAB38374." evidence="6" ref="1">
    <original>S</original>
    <variation>T</variation>
    <location>
        <position position="3"/>
    </location>
</feature>
<gene>
    <name type="primary">IBSP</name>
</gene>
<proteinExistence type="evidence at protein level"/>
<protein>
    <recommendedName>
        <fullName evidence="6">Integrin-binding sialoprotein</fullName>
    </recommendedName>
    <alternativeName>
        <fullName evidence="6">Bone sialoprotein 2</fullName>
    </alternativeName>
    <alternativeName>
        <fullName>Bone sialoprotein II</fullName>
        <shortName>BSP II</shortName>
    </alternativeName>
    <alternativeName>
        <fullName>Cell-binding sialoprotein</fullName>
    </alternativeName>
</protein>